<organism>
    <name type="scientific">Bacillus subtilis (strain 168)</name>
    <dbReference type="NCBI Taxonomy" id="224308"/>
    <lineage>
        <taxon>Bacteria</taxon>
        <taxon>Bacillati</taxon>
        <taxon>Bacillota</taxon>
        <taxon>Bacilli</taxon>
        <taxon>Bacillales</taxon>
        <taxon>Bacillaceae</taxon>
        <taxon>Bacillus</taxon>
    </lineage>
</organism>
<feature type="chain" id="PRO_0000359931" description="Putative esterase YitV">
    <location>
        <begin position="1"/>
        <end position="255"/>
    </location>
</feature>
<protein>
    <recommendedName>
        <fullName>Putative esterase YitV</fullName>
        <ecNumber>3.1.-.-</ecNumber>
    </recommendedName>
</protein>
<name>YITV_BACSU</name>
<proteinExistence type="predicted"/>
<dbReference type="EC" id="3.1.-.-"/>
<dbReference type="EMBL" id="Y09476">
    <property type="protein sequence ID" value="CAA70633.1"/>
    <property type="molecule type" value="Genomic_DNA"/>
</dbReference>
<dbReference type="EMBL" id="Z79580">
    <property type="protein sequence ID" value="CAB01837.1"/>
    <property type="molecule type" value="Genomic_DNA"/>
</dbReference>
<dbReference type="EMBL" id="AL009126">
    <property type="protein sequence ID" value="CAB12955.1"/>
    <property type="molecule type" value="Genomic_DNA"/>
</dbReference>
<dbReference type="PIR" id="G69841">
    <property type="entry name" value="G69841"/>
</dbReference>
<dbReference type="RefSeq" id="NP_388996.1">
    <property type="nucleotide sequence ID" value="NC_000964.3"/>
</dbReference>
<dbReference type="RefSeq" id="WP_003233006.1">
    <property type="nucleotide sequence ID" value="NZ_OZ025638.1"/>
</dbReference>
<dbReference type="SMR" id="P70948"/>
<dbReference type="FunCoup" id="P70948">
    <property type="interactions" value="19"/>
</dbReference>
<dbReference type="STRING" id="224308.BSU11150"/>
<dbReference type="ESTHER" id="bacsu-YITV">
    <property type="family name" value="yjfP_esterase-like"/>
</dbReference>
<dbReference type="MEROPS" id="S09.A46"/>
<dbReference type="PaxDb" id="224308-BSU11150"/>
<dbReference type="DNASU" id="939350"/>
<dbReference type="EnsemblBacteria" id="CAB12955">
    <property type="protein sequence ID" value="CAB12955"/>
    <property type="gene ID" value="BSU_11150"/>
</dbReference>
<dbReference type="GeneID" id="939350"/>
<dbReference type="KEGG" id="bsu:BSU11150"/>
<dbReference type="PATRIC" id="fig|224308.179.peg.1199"/>
<dbReference type="eggNOG" id="COG1073">
    <property type="taxonomic scope" value="Bacteria"/>
</dbReference>
<dbReference type="InParanoid" id="P70948"/>
<dbReference type="OrthoDB" id="31158at2"/>
<dbReference type="PhylomeDB" id="P70948"/>
<dbReference type="BioCyc" id="BSUB:BSU11150-MONOMER"/>
<dbReference type="Proteomes" id="UP000001570">
    <property type="component" value="Chromosome"/>
</dbReference>
<dbReference type="GO" id="GO:0052689">
    <property type="term" value="F:carboxylic ester hydrolase activity"/>
    <property type="evidence" value="ECO:0007669"/>
    <property type="project" value="UniProtKB-ARBA"/>
</dbReference>
<dbReference type="GO" id="GO:0008236">
    <property type="term" value="F:serine-type peptidase activity"/>
    <property type="evidence" value="ECO:0007669"/>
    <property type="project" value="InterPro"/>
</dbReference>
<dbReference type="GO" id="GO:0006508">
    <property type="term" value="P:proteolysis"/>
    <property type="evidence" value="ECO:0007669"/>
    <property type="project" value="InterPro"/>
</dbReference>
<dbReference type="Gene3D" id="3.40.50.1820">
    <property type="entry name" value="alpha/beta hydrolase"/>
    <property type="match status" value="1"/>
</dbReference>
<dbReference type="InterPro" id="IPR029058">
    <property type="entry name" value="AB_hydrolase_fold"/>
</dbReference>
<dbReference type="InterPro" id="IPR050261">
    <property type="entry name" value="FrsA_esterase"/>
</dbReference>
<dbReference type="InterPro" id="IPR001375">
    <property type="entry name" value="Peptidase_S9_cat"/>
</dbReference>
<dbReference type="PANTHER" id="PTHR22946">
    <property type="entry name" value="DIENELACTONE HYDROLASE DOMAIN-CONTAINING PROTEIN-RELATED"/>
    <property type="match status" value="1"/>
</dbReference>
<dbReference type="PANTHER" id="PTHR22946:SF9">
    <property type="entry name" value="POLYKETIDE TRANSFERASE AF380"/>
    <property type="match status" value="1"/>
</dbReference>
<dbReference type="Pfam" id="PF00326">
    <property type="entry name" value="Peptidase_S9"/>
    <property type="match status" value="1"/>
</dbReference>
<dbReference type="SUPFAM" id="SSF53474">
    <property type="entry name" value="alpha/beta-Hydrolases"/>
    <property type="match status" value="1"/>
</dbReference>
<keyword id="KW-0378">Hydrolase</keyword>
<keyword id="KW-1185">Reference proteome</keyword>
<accession>P70948</accession>
<accession>O08141</accession>
<accession>Q796P7</accession>
<reference key="1">
    <citation type="journal article" date="1997" name="Microbiology">
        <title>Sequencing of regions downstream of addA (98 degrees) and citG (289 degrees) in Bacillus subtilis.</title>
        <authorList>
            <person name="Medina N."/>
            <person name="Vannier F."/>
            <person name="Roche B."/>
            <person name="Autret S."/>
            <person name="Levine A."/>
            <person name="Seror S.J."/>
        </authorList>
    </citation>
    <scope>NUCLEOTIDE SEQUENCE [GENOMIC DNA]</scope>
    <source>
        <strain>168</strain>
    </source>
</reference>
<reference key="2">
    <citation type="journal article" date="1997" name="Microbiology">
        <title>A 10.3 kbp segment from nprB to argJ at the 102 degrees region of the Bacillus subtilis chromosome.</title>
        <authorList>
            <person name="Levine A."/>
            <person name="Vannier F."/>
            <person name="Roche B."/>
            <person name="Autret S."/>
            <person name="Mavel D."/>
            <person name="Seror S.J."/>
        </authorList>
    </citation>
    <scope>NUCLEOTIDE SEQUENCE [GENOMIC DNA]</scope>
    <source>
        <strain>168</strain>
    </source>
</reference>
<reference key="3">
    <citation type="journal article" date="1997" name="Nature">
        <title>The complete genome sequence of the Gram-positive bacterium Bacillus subtilis.</title>
        <authorList>
            <person name="Kunst F."/>
            <person name="Ogasawara N."/>
            <person name="Moszer I."/>
            <person name="Albertini A.M."/>
            <person name="Alloni G."/>
            <person name="Azevedo V."/>
            <person name="Bertero M.G."/>
            <person name="Bessieres P."/>
            <person name="Bolotin A."/>
            <person name="Borchert S."/>
            <person name="Borriss R."/>
            <person name="Boursier L."/>
            <person name="Brans A."/>
            <person name="Braun M."/>
            <person name="Brignell S.C."/>
            <person name="Bron S."/>
            <person name="Brouillet S."/>
            <person name="Bruschi C.V."/>
            <person name="Caldwell B."/>
            <person name="Capuano V."/>
            <person name="Carter N.M."/>
            <person name="Choi S.-K."/>
            <person name="Codani J.-J."/>
            <person name="Connerton I.F."/>
            <person name="Cummings N.J."/>
            <person name="Daniel R.A."/>
            <person name="Denizot F."/>
            <person name="Devine K.M."/>
            <person name="Duesterhoeft A."/>
            <person name="Ehrlich S.D."/>
            <person name="Emmerson P.T."/>
            <person name="Entian K.-D."/>
            <person name="Errington J."/>
            <person name="Fabret C."/>
            <person name="Ferrari E."/>
            <person name="Foulger D."/>
            <person name="Fritz C."/>
            <person name="Fujita M."/>
            <person name="Fujita Y."/>
            <person name="Fuma S."/>
            <person name="Galizzi A."/>
            <person name="Galleron N."/>
            <person name="Ghim S.-Y."/>
            <person name="Glaser P."/>
            <person name="Goffeau A."/>
            <person name="Golightly E.J."/>
            <person name="Grandi G."/>
            <person name="Guiseppi G."/>
            <person name="Guy B.J."/>
            <person name="Haga K."/>
            <person name="Haiech J."/>
            <person name="Harwood C.R."/>
            <person name="Henaut A."/>
            <person name="Hilbert H."/>
            <person name="Holsappel S."/>
            <person name="Hosono S."/>
            <person name="Hullo M.-F."/>
            <person name="Itaya M."/>
            <person name="Jones L.-M."/>
            <person name="Joris B."/>
            <person name="Karamata D."/>
            <person name="Kasahara Y."/>
            <person name="Klaerr-Blanchard M."/>
            <person name="Klein C."/>
            <person name="Kobayashi Y."/>
            <person name="Koetter P."/>
            <person name="Koningstein G."/>
            <person name="Krogh S."/>
            <person name="Kumano M."/>
            <person name="Kurita K."/>
            <person name="Lapidus A."/>
            <person name="Lardinois S."/>
            <person name="Lauber J."/>
            <person name="Lazarevic V."/>
            <person name="Lee S.-M."/>
            <person name="Levine A."/>
            <person name="Liu H."/>
            <person name="Masuda S."/>
            <person name="Mauel C."/>
            <person name="Medigue C."/>
            <person name="Medina N."/>
            <person name="Mellado R.P."/>
            <person name="Mizuno M."/>
            <person name="Moestl D."/>
            <person name="Nakai S."/>
            <person name="Noback M."/>
            <person name="Noone D."/>
            <person name="O'Reilly M."/>
            <person name="Ogawa K."/>
            <person name="Ogiwara A."/>
            <person name="Oudega B."/>
            <person name="Park S.-H."/>
            <person name="Parro V."/>
            <person name="Pohl T.M."/>
            <person name="Portetelle D."/>
            <person name="Porwollik S."/>
            <person name="Prescott A.M."/>
            <person name="Presecan E."/>
            <person name="Pujic P."/>
            <person name="Purnelle B."/>
            <person name="Rapoport G."/>
            <person name="Rey M."/>
            <person name="Reynolds S."/>
            <person name="Rieger M."/>
            <person name="Rivolta C."/>
            <person name="Rocha E."/>
            <person name="Roche B."/>
            <person name="Rose M."/>
            <person name="Sadaie Y."/>
            <person name="Sato T."/>
            <person name="Scanlan E."/>
            <person name="Schleich S."/>
            <person name="Schroeter R."/>
            <person name="Scoffone F."/>
            <person name="Sekiguchi J."/>
            <person name="Sekowska A."/>
            <person name="Seror S.J."/>
            <person name="Serror P."/>
            <person name="Shin B.-S."/>
            <person name="Soldo B."/>
            <person name="Sorokin A."/>
            <person name="Tacconi E."/>
            <person name="Takagi T."/>
            <person name="Takahashi H."/>
            <person name="Takemaru K."/>
            <person name="Takeuchi M."/>
            <person name="Tamakoshi A."/>
            <person name="Tanaka T."/>
            <person name="Terpstra P."/>
            <person name="Tognoni A."/>
            <person name="Tosato V."/>
            <person name="Uchiyama S."/>
            <person name="Vandenbol M."/>
            <person name="Vannier F."/>
            <person name="Vassarotti A."/>
            <person name="Viari A."/>
            <person name="Wambutt R."/>
            <person name="Wedler E."/>
            <person name="Wedler H."/>
            <person name="Weitzenegger T."/>
            <person name="Winters P."/>
            <person name="Wipat A."/>
            <person name="Yamamoto H."/>
            <person name="Yamane K."/>
            <person name="Yasumoto K."/>
            <person name="Yata K."/>
            <person name="Yoshida K."/>
            <person name="Yoshikawa H.-F."/>
            <person name="Zumstein E."/>
            <person name="Yoshikawa H."/>
            <person name="Danchin A."/>
        </authorList>
    </citation>
    <scope>NUCLEOTIDE SEQUENCE [LARGE SCALE GENOMIC DNA]</scope>
    <source>
        <strain>168</strain>
    </source>
</reference>
<gene>
    <name type="primary">yitV</name>
    <name type="ordered locus">BSU11150</name>
</gene>
<sequence length="255" mass="29063">MIQIENQTVSGIPFLHIVKEENRHRAVPLVIFIHGFTSAKEHNLHIAYLLAEKGFRAVLPEALHHGERGEEMAVEELAGHFWDIVLNEIEEIGVLKNHFEKEGLIDGGRIGLAGTSMGGITTLGALTAYDWIKAGVSLMGSPNYVELFQQQIDHIQSQGIEIDVPEEKVQQLMKRLELRDLSLQPEKLQQRPLLFWHGAKDKVVPYAPTRKFYDTIKSHYSEQPERLQFIGDENADHKVPRAAVLKTIEWFETYL</sequence>